<reference key="1">
    <citation type="submission" date="2006-03" db="EMBL/GenBank/DDBJ databases">
        <title>Complete sequence of chromosome of Nitrobacter hamburgensis X14.</title>
        <authorList>
            <consortium name="US DOE Joint Genome Institute"/>
            <person name="Copeland A."/>
            <person name="Lucas S."/>
            <person name="Lapidus A."/>
            <person name="Barry K."/>
            <person name="Detter J.C."/>
            <person name="Glavina del Rio T."/>
            <person name="Hammon N."/>
            <person name="Israni S."/>
            <person name="Dalin E."/>
            <person name="Tice H."/>
            <person name="Pitluck S."/>
            <person name="Chain P."/>
            <person name="Malfatti S."/>
            <person name="Shin M."/>
            <person name="Vergez L."/>
            <person name="Schmutz J."/>
            <person name="Larimer F."/>
            <person name="Land M."/>
            <person name="Hauser L."/>
            <person name="Kyrpides N."/>
            <person name="Ivanova N."/>
            <person name="Ward B."/>
            <person name="Arp D."/>
            <person name="Klotz M."/>
            <person name="Stein L."/>
            <person name="O'Mullan G."/>
            <person name="Starkenburg S."/>
            <person name="Sayavedra L."/>
            <person name="Poret-Peterson A.T."/>
            <person name="Gentry M.E."/>
            <person name="Bruce D."/>
            <person name="Richardson P."/>
        </authorList>
    </citation>
    <scope>NUCLEOTIDE SEQUENCE [LARGE SCALE GENOMIC DNA]</scope>
    <source>
        <strain>DSM 10229 / NCIMB 13809 / X14</strain>
    </source>
</reference>
<protein>
    <recommendedName>
        <fullName evidence="1">2-isopropylmalate synthase</fullName>
        <ecNumber evidence="1">2.3.3.13</ecNumber>
    </recommendedName>
    <alternativeName>
        <fullName evidence="1">Alpha-IPM synthase</fullName>
    </alternativeName>
    <alternativeName>
        <fullName evidence="1">Alpha-isopropylmalate synthase</fullName>
    </alternativeName>
</protein>
<sequence length="520" mass="56330">MTSANKSDKDRVVIFDTTLRDGEQCPGATMTFEEKLEVAEMLDDMGIDIIEAGFPIASVGDFEAVAEIAKNAKNAVIAGLARAIPGDIARAGEAVRHARRGRIHTFVSTSPIHLAHQMRKSEAEVLEIITATVTQARNLVEDVEWSAMDATRTPIDYLCKCVETAIAAGATTVNLPDTVGYAVPDEYRRMFRTIRERVPNADKAIFSVHCHDDLGLAVANSLAGVEGGARQVESTINGIGERAGNAALEEVVMAIKTRGDVMPYWCNVESTMLTRASKLVSAATSFPVQYNKAIVGRNAFAHESGIHQDGMLKNAQTYEIMTPESVGVKQTSLVMGKHSGRHAFQHKLEELGYKLAENQLQDAFVRFKALADRKKDIYDEDIVALVDEEMAASHDRIKLTSLTVIAGTHGPQRATMKLTVDGQTRIEEAEGNGPVDAVFNCIKRLVPHEAKLDLYQVHAVTHGTDAQAEVSVRLSQDGRAMTSKAADPDTLVASAKAYLGALNKIVMKHQRDVPSAAAAS</sequence>
<dbReference type="EC" id="2.3.3.13" evidence="1"/>
<dbReference type="EMBL" id="CP000319">
    <property type="protein sequence ID" value="ABE63494.1"/>
    <property type="molecule type" value="Genomic_DNA"/>
</dbReference>
<dbReference type="RefSeq" id="WP_011511160.1">
    <property type="nucleotide sequence ID" value="NC_007964.1"/>
</dbReference>
<dbReference type="SMR" id="Q1QJV3"/>
<dbReference type="STRING" id="323097.Nham_2715"/>
<dbReference type="KEGG" id="nha:Nham_2715"/>
<dbReference type="eggNOG" id="COG0119">
    <property type="taxonomic scope" value="Bacteria"/>
</dbReference>
<dbReference type="HOGENOM" id="CLU_022158_0_1_5"/>
<dbReference type="OrthoDB" id="9803573at2"/>
<dbReference type="UniPathway" id="UPA00048">
    <property type="reaction ID" value="UER00070"/>
</dbReference>
<dbReference type="Proteomes" id="UP000001953">
    <property type="component" value="Chromosome"/>
</dbReference>
<dbReference type="GO" id="GO:0005829">
    <property type="term" value="C:cytosol"/>
    <property type="evidence" value="ECO:0007669"/>
    <property type="project" value="TreeGrafter"/>
</dbReference>
<dbReference type="GO" id="GO:0003852">
    <property type="term" value="F:2-isopropylmalate synthase activity"/>
    <property type="evidence" value="ECO:0007669"/>
    <property type="project" value="UniProtKB-UniRule"/>
</dbReference>
<dbReference type="GO" id="GO:0003985">
    <property type="term" value="F:acetyl-CoA C-acetyltransferase activity"/>
    <property type="evidence" value="ECO:0007669"/>
    <property type="project" value="UniProtKB-UniRule"/>
</dbReference>
<dbReference type="GO" id="GO:0030145">
    <property type="term" value="F:manganese ion binding"/>
    <property type="evidence" value="ECO:0007669"/>
    <property type="project" value="UniProtKB-UniRule"/>
</dbReference>
<dbReference type="GO" id="GO:0009098">
    <property type="term" value="P:L-leucine biosynthetic process"/>
    <property type="evidence" value="ECO:0007669"/>
    <property type="project" value="UniProtKB-UniRule"/>
</dbReference>
<dbReference type="CDD" id="cd07940">
    <property type="entry name" value="DRE_TIM_IPMS"/>
    <property type="match status" value="1"/>
</dbReference>
<dbReference type="FunFam" id="1.10.238.260:FF:000001">
    <property type="entry name" value="2-isopropylmalate synthase"/>
    <property type="match status" value="1"/>
</dbReference>
<dbReference type="FunFam" id="3.20.20.70:FF:000010">
    <property type="entry name" value="2-isopropylmalate synthase"/>
    <property type="match status" value="1"/>
</dbReference>
<dbReference type="FunFam" id="3.30.160.270:FF:000003">
    <property type="entry name" value="2-isopropylmalate synthase"/>
    <property type="match status" value="1"/>
</dbReference>
<dbReference type="Gene3D" id="1.10.238.260">
    <property type="match status" value="1"/>
</dbReference>
<dbReference type="Gene3D" id="3.30.160.270">
    <property type="match status" value="1"/>
</dbReference>
<dbReference type="Gene3D" id="3.20.20.70">
    <property type="entry name" value="Aldolase class I"/>
    <property type="match status" value="1"/>
</dbReference>
<dbReference type="HAMAP" id="MF_01025">
    <property type="entry name" value="LeuA_type1"/>
    <property type="match status" value="1"/>
</dbReference>
<dbReference type="InterPro" id="IPR050073">
    <property type="entry name" value="2-IPM_HCS-like"/>
</dbReference>
<dbReference type="InterPro" id="IPR013709">
    <property type="entry name" value="2-isopropylmalate_synth_dimer"/>
</dbReference>
<dbReference type="InterPro" id="IPR002034">
    <property type="entry name" value="AIPM/Hcit_synth_CS"/>
</dbReference>
<dbReference type="InterPro" id="IPR013785">
    <property type="entry name" value="Aldolase_TIM"/>
</dbReference>
<dbReference type="InterPro" id="IPR054691">
    <property type="entry name" value="LeuA/HCS_post-cat"/>
</dbReference>
<dbReference type="InterPro" id="IPR036230">
    <property type="entry name" value="LeuA_allosteric_dom_sf"/>
</dbReference>
<dbReference type="InterPro" id="IPR005671">
    <property type="entry name" value="LeuA_bact_synth"/>
</dbReference>
<dbReference type="InterPro" id="IPR000891">
    <property type="entry name" value="PYR_CT"/>
</dbReference>
<dbReference type="NCBIfam" id="TIGR00973">
    <property type="entry name" value="leuA_bact"/>
    <property type="match status" value="1"/>
</dbReference>
<dbReference type="NCBIfam" id="NF002086">
    <property type="entry name" value="PRK00915.1-3"/>
    <property type="match status" value="1"/>
</dbReference>
<dbReference type="NCBIfam" id="NF002087">
    <property type="entry name" value="PRK00915.1-4"/>
    <property type="match status" value="1"/>
</dbReference>
<dbReference type="PANTHER" id="PTHR10277:SF9">
    <property type="entry name" value="2-ISOPROPYLMALATE SYNTHASE 1, CHLOROPLASTIC-RELATED"/>
    <property type="match status" value="1"/>
</dbReference>
<dbReference type="PANTHER" id="PTHR10277">
    <property type="entry name" value="HOMOCITRATE SYNTHASE-RELATED"/>
    <property type="match status" value="1"/>
</dbReference>
<dbReference type="Pfam" id="PF22617">
    <property type="entry name" value="HCS_D2"/>
    <property type="match status" value="1"/>
</dbReference>
<dbReference type="Pfam" id="PF00682">
    <property type="entry name" value="HMGL-like"/>
    <property type="match status" value="1"/>
</dbReference>
<dbReference type="Pfam" id="PF08502">
    <property type="entry name" value="LeuA_dimer"/>
    <property type="match status" value="1"/>
</dbReference>
<dbReference type="SMART" id="SM00917">
    <property type="entry name" value="LeuA_dimer"/>
    <property type="match status" value="1"/>
</dbReference>
<dbReference type="SUPFAM" id="SSF110921">
    <property type="entry name" value="2-isopropylmalate synthase LeuA, allosteric (dimerisation) domain"/>
    <property type="match status" value="1"/>
</dbReference>
<dbReference type="SUPFAM" id="SSF51569">
    <property type="entry name" value="Aldolase"/>
    <property type="match status" value="1"/>
</dbReference>
<dbReference type="PROSITE" id="PS00815">
    <property type="entry name" value="AIPM_HOMOCIT_SYNTH_1"/>
    <property type="match status" value="1"/>
</dbReference>
<dbReference type="PROSITE" id="PS00816">
    <property type="entry name" value="AIPM_HOMOCIT_SYNTH_2"/>
    <property type="match status" value="1"/>
</dbReference>
<dbReference type="PROSITE" id="PS50991">
    <property type="entry name" value="PYR_CT"/>
    <property type="match status" value="1"/>
</dbReference>
<keyword id="KW-0028">Amino-acid biosynthesis</keyword>
<keyword id="KW-0100">Branched-chain amino acid biosynthesis</keyword>
<keyword id="KW-0963">Cytoplasm</keyword>
<keyword id="KW-0432">Leucine biosynthesis</keyword>
<keyword id="KW-0464">Manganese</keyword>
<keyword id="KW-0479">Metal-binding</keyword>
<keyword id="KW-1185">Reference proteome</keyword>
<keyword id="KW-0808">Transferase</keyword>
<evidence type="ECO:0000255" key="1">
    <source>
        <dbReference type="HAMAP-Rule" id="MF_01025"/>
    </source>
</evidence>
<organism>
    <name type="scientific">Nitrobacter hamburgensis (strain DSM 10229 / NCIMB 13809 / X14)</name>
    <dbReference type="NCBI Taxonomy" id="323097"/>
    <lineage>
        <taxon>Bacteria</taxon>
        <taxon>Pseudomonadati</taxon>
        <taxon>Pseudomonadota</taxon>
        <taxon>Alphaproteobacteria</taxon>
        <taxon>Hyphomicrobiales</taxon>
        <taxon>Nitrobacteraceae</taxon>
        <taxon>Nitrobacter</taxon>
    </lineage>
</organism>
<feature type="chain" id="PRO_1000149228" description="2-isopropylmalate synthase">
    <location>
        <begin position="1"/>
        <end position="520"/>
    </location>
</feature>
<feature type="domain" description="Pyruvate carboxyltransferase" evidence="1">
    <location>
        <begin position="12"/>
        <end position="274"/>
    </location>
</feature>
<feature type="region of interest" description="Regulatory domain" evidence="1">
    <location>
        <begin position="398"/>
        <end position="520"/>
    </location>
</feature>
<feature type="binding site" evidence="1">
    <location>
        <position position="21"/>
    </location>
    <ligand>
        <name>Mn(2+)</name>
        <dbReference type="ChEBI" id="CHEBI:29035"/>
    </ligand>
</feature>
<feature type="binding site" evidence="1">
    <location>
        <position position="209"/>
    </location>
    <ligand>
        <name>Mn(2+)</name>
        <dbReference type="ChEBI" id="CHEBI:29035"/>
    </ligand>
</feature>
<feature type="binding site" evidence="1">
    <location>
        <position position="211"/>
    </location>
    <ligand>
        <name>Mn(2+)</name>
        <dbReference type="ChEBI" id="CHEBI:29035"/>
    </ligand>
</feature>
<feature type="binding site" evidence="1">
    <location>
        <position position="245"/>
    </location>
    <ligand>
        <name>Mn(2+)</name>
        <dbReference type="ChEBI" id="CHEBI:29035"/>
    </ligand>
</feature>
<comment type="function">
    <text evidence="1">Catalyzes the condensation of the acetyl group of acetyl-CoA with 3-methyl-2-oxobutanoate (2-ketoisovalerate) to form 3-carboxy-3-hydroxy-4-methylpentanoate (2-isopropylmalate).</text>
</comment>
<comment type="catalytic activity">
    <reaction evidence="1">
        <text>3-methyl-2-oxobutanoate + acetyl-CoA + H2O = (2S)-2-isopropylmalate + CoA + H(+)</text>
        <dbReference type="Rhea" id="RHEA:21524"/>
        <dbReference type="ChEBI" id="CHEBI:1178"/>
        <dbReference type="ChEBI" id="CHEBI:11851"/>
        <dbReference type="ChEBI" id="CHEBI:15377"/>
        <dbReference type="ChEBI" id="CHEBI:15378"/>
        <dbReference type="ChEBI" id="CHEBI:57287"/>
        <dbReference type="ChEBI" id="CHEBI:57288"/>
        <dbReference type="EC" id="2.3.3.13"/>
    </reaction>
</comment>
<comment type="cofactor">
    <cofactor evidence="1">
        <name>Mn(2+)</name>
        <dbReference type="ChEBI" id="CHEBI:29035"/>
    </cofactor>
</comment>
<comment type="pathway">
    <text evidence="1">Amino-acid biosynthesis; L-leucine biosynthesis; L-leucine from 3-methyl-2-oxobutanoate: step 1/4.</text>
</comment>
<comment type="subunit">
    <text evidence="1">Homodimer.</text>
</comment>
<comment type="subcellular location">
    <subcellularLocation>
        <location evidence="1">Cytoplasm</location>
    </subcellularLocation>
</comment>
<comment type="similarity">
    <text evidence="1">Belongs to the alpha-IPM synthase/homocitrate synthase family. LeuA type 1 subfamily.</text>
</comment>
<gene>
    <name evidence="1" type="primary">leuA</name>
    <name type="ordered locus">Nham_2715</name>
</gene>
<proteinExistence type="inferred from homology"/>
<accession>Q1QJV3</accession>
<name>LEU1_NITHX</name>